<protein>
    <recommendedName>
        <fullName evidence="1">Protein PsiE</fullName>
    </recommendedName>
</protein>
<gene>
    <name evidence="1" type="primary">psiE</name>
    <name type="ordered locus">ECP_4249</name>
</gene>
<proteinExistence type="inferred from homology"/>
<organism>
    <name type="scientific">Escherichia coli O6:K15:H31 (strain 536 / UPEC)</name>
    <dbReference type="NCBI Taxonomy" id="362663"/>
    <lineage>
        <taxon>Bacteria</taxon>
        <taxon>Pseudomonadati</taxon>
        <taxon>Pseudomonadota</taxon>
        <taxon>Gammaproteobacteria</taxon>
        <taxon>Enterobacterales</taxon>
        <taxon>Enterobacteriaceae</taxon>
        <taxon>Escherichia</taxon>
    </lineage>
</organism>
<dbReference type="EMBL" id="CP000247">
    <property type="protein sequence ID" value="ABG72199.1"/>
    <property type="molecule type" value="Genomic_DNA"/>
</dbReference>
<dbReference type="RefSeq" id="WP_000202902.1">
    <property type="nucleotide sequence ID" value="NC_008253.1"/>
</dbReference>
<dbReference type="SMR" id="Q0TA30"/>
<dbReference type="GeneID" id="93777857"/>
<dbReference type="KEGG" id="ecp:ECP_4249"/>
<dbReference type="HOGENOM" id="CLU_127561_0_1_6"/>
<dbReference type="Proteomes" id="UP000009182">
    <property type="component" value="Chromosome"/>
</dbReference>
<dbReference type="GO" id="GO:0005886">
    <property type="term" value="C:plasma membrane"/>
    <property type="evidence" value="ECO:0007669"/>
    <property type="project" value="UniProtKB-SubCell"/>
</dbReference>
<dbReference type="GO" id="GO:0016036">
    <property type="term" value="P:cellular response to phosphate starvation"/>
    <property type="evidence" value="ECO:0007669"/>
    <property type="project" value="InterPro"/>
</dbReference>
<dbReference type="HAMAP" id="MF_01048">
    <property type="entry name" value="PsiE"/>
    <property type="match status" value="1"/>
</dbReference>
<dbReference type="InterPro" id="IPR009315">
    <property type="entry name" value="P_starv_induced_PsiE"/>
</dbReference>
<dbReference type="InterPro" id="IPR020948">
    <property type="entry name" value="P_starv_induced_PsiE-like"/>
</dbReference>
<dbReference type="NCBIfam" id="NF002764">
    <property type="entry name" value="PRK02833.1-2"/>
    <property type="match status" value="1"/>
</dbReference>
<dbReference type="NCBIfam" id="NF002765">
    <property type="entry name" value="PRK02833.1-3"/>
    <property type="match status" value="1"/>
</dbReference>
<dbReference type="NCBIfam" id="NF002767">
    <property type="entry name" value="PRK02833.1-5"/>
    <property type="match status" value="1"/>
</dbReference>
<dbReference type="PANTHER" id="PTHR37819">
    <property type="entry name" value="PROTEIN PSIE"/>
    <property type="match status" value="1"/>
</dbReference>
<dbReference type="PANTHER" id="PTHR37819:SF1">
    <property type="entry name" value="PROTEIN PSIE"/>
    <property type="match status" value="1"/>
</dbReference>
<dbReference type="Pfam" id="PF06146">
    <property type="entry name" value="PsiE"/>
    <property type="match status" value="1"/>
</dbReference>
<dbReference type="PIRSF" id="PIRSF029598">
    <property type="entry name" value="PsiE"/>
    <property type="match status" value="1"/>
</dbReference>
<evidence type="ECO:0000255" key="1">
    <source>
        <dbReference type="HAMAP-Rule" id="MF_01048"/>
    </source>
</evidence>
<sequence length="136" mass="15597">MTSLSRPRVEFISTILQTVLNLGLLCLGLILVVFLGKETVHLADVLFAPEQTSKYELVEGLVVYFLYFEFIALIVKYFQSGFHFPLRYFVYIGITAIVRLIIVDHKSPLDVLIYSAAILLLVITLWLCNSKRLKRE</sequence>
<comment type="subcellular location">
    <subcellularLocation>
        <location evidence="1">Cell inner membrane</location>
        <topology evidence="1">Multi-pass membrane protein</topology>
    </subcellularLocation>
</comment>
<comment type="similarity">
    <text evidence="1">Belongs to the PsiE family.</text>
</comment>
<feature type="chain" id="PRO_1000064313" description="Protein PsiE">
    <location>
        <begin position="1"/>
        <end position="136"/>
    </location>
</feature>
<feature type="transmembrane region" description="Helical" evidence="1">
    <location>
        <begin position="15"/>
        <end position="35"/>
    </location>
</feature>
<feature type="transmembrane region" description="Helical" evidence="1">
    <location>
        <begin position="55"/>
        <end position="75"/>
    </location>
</feature>
<feature type="transmembrane region" description="Helical" evidence="1">
    <location>
        <begin position="82"/>
        <end position="102"/>
    </location>
</feature>
<feature type="transmembrane region" description="Helical" evidence="1">
    <location>
        <begin position="108"/>
        <end position="128"/>
    </location>
</feature>
<keyword id="KW-0997">Cell inner membrane</keyword>
<keyword id="KW-1003">Cell membrane</keyword>
<keyword id="KW-0472">Membrane</keyword>
<keyword id="KW-0812">Transmembrane</keyword>
<keyword id="KW-1133">Transmembrane helix</keyword>
<accession>Q0TA30</accession>
<reference key="1">
    <citation type="journal article" date="2006" name="Mol. Microbiol.">
        <title>Role of pathogenicity island-associated integrases in the genome plasticity of uropathogenic Escherichia coli strain 536.</title>
        <authorList>
            <person name="Hochhut B."/>
            <person name="Wilde C."/>
            <person name="Balling G."/>
            <person name="Middendorf B."/>
            <person name="Dobrindt U."/>
            <person name="Brzuszkiewicz E."/>
            <person name="Gottschalk G."/>
            <person name="Carniel E."/>
            <person name="Hacker J."/>
        </authorList>
    </citation>
    <scope>NUCLEOTIDE SEQUENCE [LARGE SCALE GENOMIC DNA]</scope>
    <source>
        <strain>536 / UPEC</strain>
    </source>
</reference>
<name>PSIE_ECOL5</name>